<reference key="1">
    <citation type="journal article" date="1983" name="Proc. Natl. Acad. Sci. U.S.A.">
        <title>Nucleotide sequence analysis of the proviral genome of avian myelocytomatosis virus (MC29).</title>
        <authorList>
            <person name="Reddy E.P."/>
            <person name="Reynolds R.K."/>
            <person name="Watson D.K."/>
            <person name="Schultz R.A."/>
            <person name="Lautenberger J."/>
            <person name="Papas T.S."/>
        </authorList>
    </citation>
    <scope>NUCLEOTIDE SEQUENCE [GENOMIC DNA]</scope>
</reference>
<gene>
    <name type="primary">gag</name>
</gene>
<comment type="subcellular location">
    <molecule>Matrix protein p19</molecule>
    <subcellularLocation>
        <location evidence="3">Virion</location>
    </subcellularLocation>
</comment>
<comment type="domain">
    <text evidence="3">Gag polyprotein: Late-budding domains (L domains) are short sequence motifs essential for viral particle budding. They recruit proteins of the host ESCRT machinery (Endosomal Sorting Complex Required for Transport) or ESCRT-associated proteins. Gag contains one L domain: a PPXY motif which potentially interacts with the WW domain 3 of NEDD4 E3 ubiquitin ligase (Potential).</text>
</comment>
<comment type="PTM">
    <text evidence="1">Gag polyprotein: Specific enzymatic cleavages in vivo yield mature proteins.</text>
</comment>
<comment type="miscellaneous">
    <text evidence="3">Gag polyprotein: This protein is synthesized as a Gag-vMyc polyprotein.</text>
</comment>
<sequence>MEAVIKVISSACKTYCGKTSPSKKEIGAMLSLLQKEGLLMSPSDLYSPGSWDPITAALTQRAMVLGKSGELKTWGLVLGALKAAREEQVTSEQAKFWLGLGGGRVSPPGPECIEKPATERRIDKGEEVGETTVQRDAKMAPEETATPKTVGTSCYHCGTAIGCNCATASAPPPPYVGSGLYPSLAGVGEQQGQGGDTPRGAEQPRAEPGHAGQAPGPALTDWARVGEELASTGPPVVAMPVVINTEGPAWTPLEPKLITRLADTVRTKGLRSPITMAEVEALMSSRLLPHDVTNLMRVILGPAPYALWMDAWGVQLQTVIAAATRDPRHPANGQGRGERTNLDRLKGLADGMVGNPQGQAALLRPGELVAITASALQAFREVARLAEPAGPWADITQGPSESFVDFANRLIKAVEGSDLPPSARAPVIIDCFRQKSQPDIQQLIRAAPSTVHG</sequence>
<accession>P03323</accession>
<organism>
    <name type="scientific">Avian myelocytomatosis virus 29</name>
    <name type="common">Avian myelocytomatosis virus MC29</name>
    <dbReference type="NCBI Taxonomy" id="11868"/>
    <lineage>
        <taxon>Viruses</taxon>
        <taxon>Riboviria</taxon>
        <taxon>Pararnavirae</taxon>
        <taxon>Artverviricota</taxon>
        <taxon>Revtraviricetes</taxon>
        <taxon>Ortervirales</taxon>
        <taxon>Retroviridae</taxon>
        <taxon>Orthoretrovirinae</taxon>
        <taxon>Alpharetrovirus</taxon>
    </lineage>
</organism>
<name>GAG_AVIMC</name>
<proteinExistence type="inferred from homology"/>
<feature type="chain" id="PRO_0000040815" description="Matrix protein p19">
    <location>
        <begin position="1"/>
        <end position="155"/>
    </location>
</feature>
<feature type="chain" id="PRO_0000442119" description="p2A">
    <location>
        <begin position="156"/>
        <end position="166"/>
    </location>
</feature>
<feature type="chain" id="PRO_0000442120" description="p2B">
    <location>
        <begin position="167"/>
        <end position="177"/>
    </location>
</feature>
<feature type="chain" id="PRO_0000040816" description="p10">
    <location>
        <begin position="178"/>
        <end position="239"/>
    </location>
</feature>
<feature type="chain" id="PRO_0000040817" description="Capsid protein p27, truncated">
    <location>
        <begin position="240"/>
        <end position="453"/>
    </location>
</feature>
<feature type="region of interest" description="Disordered" evidence="2">
    <location>
        <begin position="128"/>
        <end position="150"/>
    </location>
</feature>
<feature type="region of interest" description="Disordered" evidence="2">
    <location>
        <begin position="181"/>
        <end position="217"/>
    </location>
</feature>
<feature type="short sequence motif" description="PPXY motif" evidence="1">
    <location>
        <begin position="172"/>
        <end position="175"/>
    </location>
</feature>
<feature type="compositionally biased region" description="Basic and acidic residues" evidence="2">
    <location>
        <begin position="128"/>
        <end position="141"/>
    </location>
</feature>
<feature type="site" description="Cleavage; by viral protease p15" evidence="1">
    <location>
        <begin position="155"/>
        <end position="156"/>
    </location>
</feature>
<feature type="site" description="Cleavage; by viral protease p15" evidence="1">
    <location>
        <begin position="166"/>
        <end position="167"/>
    </location>
</feature>
<feature type="site" description="Cleavage; by viral protease p15" evidence="1">
    <location>
        <begin position="177"/>
        <end position="178"/>
    </location>
</feature>
<feature type="site" description="Cleavage; by viral protease p15" evidence="1">
    <location>
        <begin position="239"/>
        <end position="240"/>
    </location>
</feature>
<organismHost>
    <name type="scientific">Galliformes</name>
    <dbReference type="NCBI Taxonomy" id="8976"/>
</organismHost>
<evidence type="ECO:0000250" key="1">
    <source>
        <dbReference type="UniProtKB" id="P03322"/>
    </source>
</evidence>
<evidence type="ECO:0000256" key="2">
    <source>
        <dbReference type="SAM" id="MobiDB-lite"/>
    </source>
</evidence>
<evidence type="ECO:0000305" key="3"/>
<keyword id="KW-0945">Host-virus interaction</keyword>
<keyword id="KW-1198">Viral budding</keyword>
<keyword id="KW-1187">Viral budding via the host ESCRT complexes</keyword>
<keyword id="KW-0468">Viral matrix protein</keyword>
<keyword id="KW-1188">Viral release from host cell</keyword>
<keyword id="KW-0946">Virion</keyword>
<protein>
    <recommendedName>
        <fullName>Gag polyprotein</fullName>
    </recommendedName>
    <component>
        <recommendedName>
            <fullName>Matrix protein p19</fullName>
        </recommendedName>
    </component>
    <component>
        <recommendedName>
            <fullName>p2A</fullName>
        </recommendedName>
    </component>
    <component>
        <recommendedName>
            <fullName>p2B</fullName>
        </recommendedName>
    </component>
    <component>
        <recommendedName>
            <fullName>p10</fullName>
        </recommendedName>
    </component>
    <component>
        <recommendedName>
            <fullName>Capsid protein p27, truncated</fullName>
        </recommendedName>
    </component>
</protein>
<dbReference type="EMBL" id="V01174">
    <property type="protein sequence ID" value="CAA24499.1"/>
    <property type="molecule type" value="Genomic_DNA"/>
</dbReference>
<dbReference type="BMRB" id="P03323"/>
<dbReference type="SMR" id="P03323"/>
<dbReference type="GO" id="GO:0044423">
    <property type="term" value="C:virion component"/>
    <property type="evidence" value="ECO:0007669"/>
    <property type="project" value="UniProtKB-KW"/>
</dbReference>
<dbReference type="GO" id="GO:0039660">
    <property type="term" value="F:structural constituent of virion"/>
    <property type="evidence" value="ECO:0007669"/>
    <property type="project" value="UniProtKB-KW"/>
</dbReference>
<dbReference type="GO" id="GO:0039702">
    <property type="term" value="P:viral budding via host ESCRT complex"/>
    <property type="evidence" value="ECO:0007669"/>
    <property type="project" value="UniProtKB-KW"/>
</dbReference>
<dbReference type="FunFam" id="1.10.375.10:FF:000003">
    <property type="entry name" value="Gag polyprotein"/>
    <property type="match status" value="1"/>
</dbReference>
<dbReference type="Gene3D" id="1.10.1200.30">
    <property type="match status" value="1"/>
</dbReference>
<dbReference type="Gene3D" id="1.10.375.10">
    <property type="entry name" value="Human Immunodeficiency Virus Type 1 Capsid Protein"/>
    <property type="match status" value="1"/>
</dbReference>
<dbReference type="Gene3D" id="1.10.150.90">
    <property type="entry name" value="Immunodeficiency lentiviruses, gag gene matrix protein p17"/>
    <property type="match status" value="1"/>
</dbReference>
<dbReference type="InterPro" id="IPR004028">
    <property type="entry name" value="Gag_M"/>
</dbReference>
<dbReference type="InterPro" id="IPR012344">
    <property type="entry name" value="Matrix_HIV/RSV_N"/>
</dbReference>
<dbReference type="InterPro" id="IPR050195">
    <property type="entry name" value="Primate_lentivir_Gag_pol-like"/>
</dbReference>
<dbReference type="InterPro" id="IPR008916">
    <property type="entry name" value="Retrov_capsid_C"/>
</dbReference>
<dbReference type="InterPro" id="IPR008919">
    <property type="entry name" value="Retrov_capsid_N"/>
</dbReference>
<dbReference type="InterPro" id="IPR010999">
    <property type="entry name" value="Retrovr_matrix"/>
</dbReference>
<dbReference type="PANTHER" id="PTHR40389">
    <property type="entry name" value="ENDOGENOUS RETROVIRUS GROUP K MEMBER 24 GAG POLYPROTEIN-RELATED"/>
    <property type="match status" value="1"/>
</dbReference>
<dbReference type="PANTHER" id="PTHR40389:SF3">
    <property type="entry name" value="IGE-BINDING PROTEIN"/>
    <property type="match status" value="1"/>
</dbReference>
<dbReference type="Pfam" id="PF00607">
    <property type="entry name" value="Gag_p24"/>
    <property type="match status" value="1"/>
</dbReference>
<dbReference type="Pfam" id="PF02813">
    <property type="entry name" value="Retro_M"/>
    <property type="match status" value="1"/>
</dbReference>
<dbReference type="SUPFAM" id="SSF47836">
    <property type="entry name" value="Retroviral matrix proteins"/>
    <property type="match status" value="1"/>
</dbReference>
<dbReference type="SUPFAM" id="SSF47353">
    <property type="entry name" value="Retrovirus capsid dimerization domain-like"/>
    <property type="match status" value="1"/>
</dbReference>
<dbReference type="SUPFAM" id="SSF47943">
    <property type="entry name" value="Retrovirus capsid protein, N-terminal core domain"/>
    <property type="match status" value="1"/>
</dbReference>